<organism>
    <name type="scientific">Acanthamoeba polyphaga mimivirus</name>
    <name type="common">APMV</name>
    <dbReference type="NCBI Taxonomy" id="212035"/>
    <lineage>
        <taxon>Viruses</taxon>
        <taxon>Varidnaviria</taxon>
        <taxon>Bamfordvirae</taxon>
        <taxon>Nucleocytoviricota</taxon>
        <taxon>Megaviricetes</taxon>
        <taxon>Imitervirales</taxon>
        <taxon>Mimiviridae</taxon>
        <taxon>Megamimivirinae</taxon>
        <taxon>Mimivirus</taxon>
        <taxon>Mimivirus bradfordmassiliense</taxon>
    </lineage>
</organism>
<dbReference type="EMBL" id="AY653733">
    <property type="protein sequence ID" value="AAV50492.1"/>
    <property type="molecule type" value="Genomic_DNA"/>
</dbReference>
<dbReference type="SMR" id="Q5UQB0"/>
<dbReference type="KEGG" id="vg:9924826"/>
<dbReference type="OrthoDB" id="8472at10239"/>
<dbReference type="Proteomes" id="UP000001134">
    <property type="component" value="Genome"/>
</dbReference>
<dbReference type="Gene3D" id="1.25.40.20">
    <property type="entry name" value="Ankyrin repeat-containing domain"/>
    <property type="match status" value="1"/>
</dbReference>
<dbReference type="InterPro" id="IPR036770">
    <property type="entry name" value="Ankyrin_rpt-contain_sf"/>
</dbReference>
<dbReference type="InterPro" id="IPR052050">
    <property type="entry name" value="SecEffector_AnkRepeat"/>
</dbReference>
<dbReference type="PANTHER" id="PTHR46586">
    <property type="entry name" value="ANKYRIN REPEAT-CONTAINING PROTEIN"/>
    <property type="match status" value="1"/>
</dbReference>
<dbReference type="PANTHER" id="PTHR46586:SF3">
    <property type="entry name" value="ANKYRIN REPEAT-CONTAINING PROTEIN"/>
    <property type="match status" value="1"/>
</dbReference>
<dbReference type="SUPFAM" id="SSF48403">
    <property type="entry name" value="Ankyrin repeat"/>
    <property type="match status" value="1"/>
</dbReference>
<gene>
    <name type="ordered locus">MIMI_R219</name>
</gene>
<accession>Q5UQB0</accession>
<organismHost>
    <name type="scientific">Acanthamoeba polyphaga</name>
    <name type="common">Amoeba</name>
    <dbReference type="NCBI Taxonomy" id="5757"/>
</organismHost>
<feature type="chain" id="PRO_0000253201" description="Putative ankyrin repeat protein R219">
    <location>
        <begin position="1"/>
        <end position="663"/>
    </location>
</feature>
<feature type="repeat" description="ANK 1">
    <location>
        <begin position="91"/>
        <end position="118"/>
    </location>
</feature>
<feature type="repeat" description="ANK 2">
    <location>
        <begin position="119"/>
        <end position="148"/>
    </location>
</feature>
<feature type="repeat" description="ANK 3">
    <location>
        <begin position="200"/>
        <end position="229"/>
    </location>
</feature>
<feature type="repeat" description="ANK 4">
    <location>
        <begin position="258"/>
        <end position="288"/>
    </location>
</feature>
<feature type="repeat" description="ANK 5">
    <location>
        <begin position="322"/>
        <end position="351"/>
    </location>
</feature>
<sequence>MNKTTSQEILKTNNCLEWLFEKIFKQLVPNKQELYDLPFSEIYSRTFCNSQIHQLIAESLKSTVIEIETYLTDKKFIEKFLFVSVRREYKFRIKKLHVQIMLKEYDKIEFLINSGYKVDFDSLKLACLNGSLDILNLLLKFYQKKLSSELLMYCSEFSHYDIYQLLTTKYNLYPNLSVFYRAVLSDSIEIVEDVSSNISANQQVMENAFKTNHTDIINLLLIRAKKDGTHIDRNLVVYPIMNCNFELLTILSNMNLIDWHVELYYSALLSGSMEMITYLEDKIDKINPDFHKKKILDSSHQSSGKNSLLLEDIIYEIDGKKYFSHTMNYAIQSGSVNVVDYIWSRGYGITVSNFITAIKQGSVEILERLCKWYHLKLPIYLIHYFSTKSYVTNKIAKAKVLIENKLLMINEPVQECIELYKKEETHIKLIEQPTQIVSDSKYDPDYLMQYSMFFIPMKGFKLNHRLITQIRINLQLNYMDSLVELYTRDRNYADKMILLNNLFLFGTIDQIKILYPLLKTKYCPDKPILMEIICKCEITKLCYLKNNRLLDNDVVQSLIPLVIMLENPLINALFSKLTTVNLIDKYIVLSNNVTLIRKWLNESPVIDKNQIKSLFLLDDTKITDSILSKYSVTICKHKEEFLDWCQEEDLLDTRQKIEKKYLK</sequence>
<proteinExistence type="predicted"/>
<reference key="1">
    <citation type="journal article" date="2004" name="Science">
        <title>The 1.2-megabase genome sequence of Mimivirus.</title>
        <authorList>
            <person name="Raoult D."/>
            <person name="Audic S."/>
            <person name="Robert C."/>
            <person name="Abergel C."/>
            <person name="Renesto P."/>
            <person name="Ogata H."/>
            <person name="La Scola B."/>
            <person name="Susan M."/>
            <person name="Claverie J.-M."/>
        </authorList>
    </citation>
    <scope>NUCLEOTIDE SEQUENCE [LARGE SCALE GENOMIC DNA]</scope>
    <source>
        <strain>Rowbotham-Bradford</strain>
    </source>
</reference>
<name>YR219_MIMIV</name>
<protein>
    <recommendedName>
        <fullName>Putative ankyrin repeat protein R219</fullName>
    </recommendedName>
</protein>
<keyword id="KW-0040">ANK repeat</keyword>
<keyword id="KW-1185">Reference proteome</keyword>
<keyword id="KW-0677">Repeat</keyword>